<accession>A5UX75</accession>
<keyword id="KW-1003">Cell membrane</keyword>
<keyword id="KW-0285">Flavoprotein</keyword>
<keyword id="KW-0288">FMN</keyword>
<keyword id="KW-0472">Membrane</keyword>
<keyword id="KW-0560">Oxidoreductase</keyword>
<keyword id="KW-0665">Pyrimidine biosynthesis</keyword>
<feature type="chain" id="PRO_0000336488" description="Dihydroorotate dehydrogenase (quinone)">
    <location>
        <begin position="1"/>
        <end position="361"/>
    </location>
</feature>
<feature type="active site" description="Nucleophile" evidence="1">
    <location>
        <position position="183"/>
    </location>
</feature>
<feature type="binding site" evidence="1">
    <location>
        <begin position="69"/>
        <end position="73"/>
    </location>
    <ligand>
        <name>FMN</name>
        <dbReference type="ChEBI" id="CHEBI:58210"/>
    </ligand>
</feature>
<feature type="binding site" evidence="1">
    <location>
        <position position="73"/>
    </location>
    <ligand>
        <name>substrate</name>
    </ligand>
</feature>
<feature type="binding site" evidence="1">
    <location>
        <position position="93"/>
    </location>
    <ligand>
        <name>FMN</name>
        <dbReference type="ChEBI" id="CHEBI:58210"/>
    </ligand>
</feature>
<feature type="binding site" evidence="1">
    <location>
        <begin position="118"/>
        <end position="122"/>
    </location>
    <ligand>
        <name>substrate</name>
    </ligand>
</feature>
<feature type="binding site" evidence="1">
    <location>
        <position position="147"/>
    </location>
    <ligand>
        <name>FMN</name>
        <dbReference type="ChEBI" id="CHEBI:58210"/>
    </ligand>
</feature>
<feature type="binding site" evidence="1">
    <location>
        <position position="180"/>
    </location>
    <ligand>
        <name>FMN</name>
        <dbReference type="ChEBI" id="CHEBI:58210"/>
    </ligand>
</feature>
<feature type="binding site" evidence="1">
    <location>
        <position position="180"/>
    </location>
    <ligand>
        <name>substrate</name>
    </ligand>
</feature>
<feature type="binding site" evidence="1">
    <location>
        <position position="185"/>
    </location>
    <ligand>
        <name>substrate</name>
    </ligand>
</feature>
<feature type="binding site" evidence="1">
    <location>
        <position position="221"/>
    </location>
    <ligand>
        <name>FMN</name>
        <dbReference type="ChEBI" id="CHEBI:58210"/>
    </ligand>
</feature>
<feature type="binding site" evidence="1">
    <location>
        <position position="249"/>
    </location>
    <ligand>
        <name>FMN</name>
        <dbReference type="ChEBI" id="CHEBI:58210"/>
    </ligand>
</feature>
<feature type="binding site" evidence="1">
    <location>
        <begin position="250"/>
        <end position="251"/>
    </location>
    <ligand>
        <name>substrate</name>
    </ligand>
</feature>
<feature type="binding site" evidence="1">
    <location>
        <position position="271"/>
    </location>
    <ligand>
        <name>FMN</name>
        <dbReference type="ChEBI" id="CHEBI:58210"/>
    </ligand>
</feature>
<feature type="binding site" evidence="1">
    <location>
        <position position="300"/>
    </location>
    <ligand>
        <name>FMN</name>
        <dbReference type="ChEBI" id="CHEBI:58210"/>
    </ligand>
</feature>
<feature type="binding site" evidence="1">
    <location>
        <begin position="321"/>
        <end position="322"/>
    </location>
    <ligand>
        <name>FMN</name>
        <dbReference type="ChEBI" id="CHEBI:58210"/>
    </ligand>
</feature>
<gene>
    <name evidence="1" type="primary">pyrD</name>
    <name type="ordered locus">RoseRS_2860</name>
</gene>
<organism>
    <name type="scientific">Roseiflexus sp. (strain RS-1)</name>
    <dbReference type="NCBI Taxonomy" id="357808"/>
    <lineage>
        <taxon>Bacteria</taxon>
        <taxon>Bacillati</taxon>
        <taxon>Chloroflexota</taxon>
        <taxon>Chloroflexia</taxon>
        <taxon>Chloroflexales</taxon>
        <taxon>Roseiflexineae</taxon>
        <taxon>Roseiflexaceae</taxon>
        <taxon>Roseiflexus</taxon>
    </lineage>
</organism>
<evidence type="ECO:0000255" key="1">
    <source>
        <dbReference type="HAMAP-Rule" id="MF_00225"/>
    </source>
</evidence>
<proteinExistence type="inferred from homology"/>
<name>PYRD_ROSS1</name>
<protein>
    <recommendedName>
        <fullName evidence="1">Dihydroorotate dehydrogenase (quinone)</fullName>
        <ecNumber evidence="1">1.3.5.2</ecNumber>
    </recommendedName>
    <alternativeName>
        <fullName evidence="1">DHOdehase</fullName>
        <shortName evidence="1">DHOD</shortName>
        <shortName evidence="1">DHODase</shortName>
    </alternativeName>
    <alternativeName>
        <fullName evidence="1">Dihydroorotate oxidase</fullName>
    </alternativeName>
</protein>
<reference key="1">
    <citation type="submission" date="2007-04" db="EMBL/GenBank/DDBJ databases">
        <title>Complete sequence of Roseiflexus sp. RS-1.</title>
        <authorList>
            <consortium name="US DOE Joint Genome Institute"/>
            <person name="Copeland A."/>
            <person name="Lucas S."/>
            <person name="Lapidus A."/>
            <person name="Barry K."/>
            <person name="Detter J.C."/>
            <person name="Glavina del Rio T."/>
            <person name="Hammon N."/>
            <person name="Israni S."/>
            <person name="Dalin E."/>
            <person name="Tice H."/>
            <person name="Pitluck S."/>
            <person name="Chertkov O."/>
            <person name="Brettin T."/>
            <person name="Bruce D."/>
            <person name="Han C."/>
            <person name="Schmutz J."/>
            <person name="Larimer F."/>
            <person name="Land M."/>
            <person name="Hauser L."/>
            <person name="Kyrpides N."/>
            <person name="Mikhailova N."/>
            <person name="Bryant D.A."/>
            <person name="Richardson P."/>
        </authorList>
    </citation>
    <scope>NUCLEOTIDE SEQUENCE [LARGE SCALE GENOMIC DNA]</scope>
    <source>
        <strain>RS-1</strain>
    </source>
</reference>
<dbReference type="EC" id="1.3.5.2" evidence="1"/>
<dbReference type="EMBL" id="CP000686">
    <property type="protein sequence ID" value="ABQ91228.1"/>
    <property type="molecule type" value="Genomic_DNA"/>
</dbReference>
<dbReference type="RefSeq" id="WP_011957572.1">
    <property type="nucleotide sequence ID" value="NC_009523.1"/>
</dbReference>
<dbReference type="SMR" id="A5UX75"/>
<dbReference type="STRING" id="357808.RoseRS_2860"/>
<dbReference type="KEGG" id="rrs:RoseRS_2860"/>
<dbReference type="eggNOG" id="COG0167">
    <property type="taxonomic scope" value="Bacteria"/>
</dbReference>
<dbReference type="HOGENOM" id="CLU_013640_2_0_0"/>
<dbReference type="OrthoDB" id="9802377at2"/>
<dbReference type="UniPathway" id="UPA00070">
    <property type="reaction ID" value="UER00946"/>
</dbReference>
<dbReference type="Proteomes" id="UP000006554">
    <property type="component" value="Chromosome"/>
</dbReference>
<dbReference type="GO" id="GO:0005737">
    <property type="term" value="C:cytoplasm"/>
    <property type="evidence" value="ECO:0007669"/>
    <property type="project" value="InterPro"/>
</dbReference>
<dbReference type="GO" id="GO:0005886">
    <property type="term" value="C:plasma membrane"/>
    <property type="evidence" value="ECO:0007669"/>
    <property type="project" value="UniProtKB-SubCell"/>
</dbReference>
<dbReference type="GO" id="GO:0106430">
    <property type="term" value="F:dihydroorotate dehydrogenase (quinone) activity"/>
    <property type="evidence" value="ECO:0007669"/>
    <property type="project" value="UniProtKB-EC"/>
</dbReference>
<dbReference type="GO" id="GO:0006207">
    <property type="term" value="P:'de novo' pyrimidine nucleobase biosynthetic process"/>
    <property type="evidence" value="ECO:0007669"/>
    <property type="project" value="InterPro"/>
</dbReference>
<dbReference type="GO" id="GO:0044205">
    <property type="term" value="P:'de novo' UMP biosynthetic process"/>
    <property type="evidence" value="ECO:0007669"/>
    <property type="project" value="UniProtKB-UniRule"/>
</dbReference>
<dbReference type="CDD" id="cd04738">
    <property type="entry name" value="DHOD_2_like"/>
    <property type="match status" value="1"/>
</dbReference>
<dbReference type="Gene3D" id="3.20.20.70">
    <property type="entry name" value="Aldolase class I"/>
    <property type="match status" value="1"/>
</dbReference>
<dbReference type="HAMAP" id="MF_00225">
    <property type="entry name" value="DHO_dh_type2"/>
    <property type="match status" value="1"/>
</dbReference>
<dbReference type="InterPro" id="IPR013785">
    <property type="entry name" value="Aldolase_TIM"/>
</dbReference>
<dbReference type="InterPro" id="IPR050074">
    <property type="entry name" value="DHO_dehydrogenase"/>
</dbReference>
<dbReference type="InterPro" id="IPR005719">
    <property type="entry name" value="Dihydroorotate_DH_2"/>
</dbReference>
<dbReference type="InterPro" id="IPR005720">
    <property type="entry name" value="Dihydroorotate_DH_cat"/>
</dbReference>
<dbReference type="InterPro" id="IPR001295">
    <property type="entry name" value="Dihydroorotate_DH_CS"/>
</dbReference>
<dbReference type="NCBIfam" id="NF003645">
    <property type="entry name" value="PRK05286.1-2"/>
    <property type="match status" value="1"/>
</dbReference>
<dbReference type="NCBIfam" id="NF003652">
    <property type="entry name" value="PRK05286.2-5"/>
    <property type="match status" value="1"/>
</dbReference>
<dbReference type="NCBIfam" id="TIGR01036">
    <property type="entry name" value="pyrD_sub2"/>
    <property type="match status" value="1"/>
</dbReference>
<dbReference type="PANTHER" id="PTHR48109:SF4">
    <property type="entry name" value="DIHYDROOROTATE DEHYDROGENASE (QUINONE), MITOCHONDRIAL"/>
    <property type="match status" value="1"/>
</dbReference>
<dbReference type="PANTHER" id="PTHR48109">
    <property type="entry name" value="DIHYDROOROTATE DEHYDROGENASE (QUINONE), MITOCHONDRIAL-RELATED"/>
    <property type="match status" value="1"/>
</dbReference>
<dbReference type="Pfam" id="PF01180">
    <property type="entry name" value="DHO_dh"/>
    <property type="match status" value="1"/>
</dbReference>
<dbReference type="SUPFAM" id="SSF51395">
    <property type="entry name" value="FMN-linked oxidoreductases"/>
    <property type="match status" value="1"/>
</dbReference>
<dbReference type="PROSITE" id="PS00911">
    <property type="entry name" value="DHODEHASE_1"/>
    <property type="match status" value="1"/>
</dbReference>
<dbReference type="PROSITE" id="PS00912">
    <property type="entry name" value="DHODEHASE_2"/>
    <property type="match status" value="1"/>
</dbReference>
<comment type="function">
    <text evidence="1">Catalyzes the conversion of dihydroorotate to orotate with quinone as electron acceptor.</text>
</comment>
<comment type="catalytic activity">
    <reaction evidence="1">
        <text>(S)-dihydroorotate + a quinone = orotate + a quinol</text>
        <dbReference type="Rhea" id="RHEA:30187"/>
        <dbReference type="ChEBI" id="CHEBI:24646"/>
        <dbReference type="ChEBI" id="CHEBI:30839"/>
        <dbReference type="ChEBI" id="CHEBI:30864"/>
        <dbReference type="ChEBI" id="CHEBI:132124"/>
        <dbReference type="EC" id="1.3.5.2"/>
    </reaction>
</comment>
<comment type="cofactor">
    <cofactor evidence="1">
        <name>FMN</name>
        <dbReference type="ChEBI" id="CHEBI:58210"/>
    </cofactor>
    <text evidence="1">Binds 1 FMN per subunit.</text>
</comment>
<comment type="pathway">
    <text evidence="1">Pyrimidine metabolism; UMP biosynthesis via de novo pathway; orotate from (S)-dihydroorotate (quinone route): step 1/1.</text>
</comment>
<comment type="subunit">
    <text evidence="1">Monomer.</text>
</comment>
<comment type="subcellular location">
    <subcellularLocation>
        <location evidence="1">Cell membrane</location>
        <topology evidence="1">Peripheral membrane protein</topology>
    </subcellularLocation>
</comment>
<comment type="similarity">
    <text evidence="1">Belongs to the dihydroorotate dehydrogenase family. Type 2 subfamily.</text>
</comment>
<sequence length="361" mass="39052">MTSLYALIRPLLFRLDAERAHDLTAKALRVTSRAPLLPRLIRALYAWEDPLLAVDWSGLHFANPVGVAAGFDKRADLVDGLALLGFGHIEVGTVTPRPQPGNPRPRLFRLPEDTALINRLGFNSPGMVAVARALRARRSRDVIVGVNIGKNRDTPLERAVEDYVATFVALAPIADYVAVNISSPNTPGLRRLHERAALETLLHELTRLNRALPHPRPIALKVSPDETPDQLEAVVRAGCDAGIAAFIATNTTLARDDLHSRLAIETGGLSGRPLTQRARQVIGAIYRLTHGAPPVIGVGGIATAEDAYQHIRAGARLIQIYTGMVYAGPAIARDIKQGLARRLRRDGFTSLEEAVGVMVAA</sequence>